<sequence length="445" mass="49291">MIDRPIHVIGGGLAGTEAAWQIAQAGIPVILHEMRPIRSSPAHHSQFLAELVCSNSFGAMAVDRATGLLHEELRRLNSLVIAQADQHSVPAGGALAVDRGVFSRNLTEILANHPLVTLKRQEITEIPRDGIVVLTTGPLTSAALAADLQNFAGLDYLSFFDAASPIILGESIDRSIAFLASRYDKGEAAYLNCPMDREQYLHFWQELKQAEQAELKDFERENAKFFEACLPIEELASRGEDTMRFGPLKPVGLADPRYPDQRPYAVIQLRMEDKAGQLWNMVGFQTNLKWGEQTRVFRLIPGLEKAEFVRMGVMHKNTFINSPQLLSSSLQFKSRPTLLAAGQLIGTEGYTAAAAGGWLAGTNAARLALGLETVTLPTTTMMGSLFEFISSAEPKHFQPMPPNFGILPNFTRKIRNKRERYGQYADRSLQDLEAWMNQLKTPCLV</sequence>
<organism>
    <name type="scientific">Microcystis aeruginosa (strain NIES-843 / IAM M-2473)</name>
    <dbReference type="NCBI Taxonomy" id="449447"/>
    <lineage>
        <taxon>Bacteria</taxon>
        <taxon>Bacillati</taxon>
        <taxon>Cyanobacteriota</taxon>
        <taxon>Cyanophyceae</taxon>
        <taxon>Oscillatoriophycideae</taxon>
        <taxon>Chroococcales</taxon>
        <taxon>Microcystaceae</taxon>
        <taxon>Microcystis</taxon>
    </lineage>
</organism>
<evidence type="ECO:0000255" key="1">
    <source>
        <dbReference type="HAMAP-Rule" id="MF_01037"/>
    </source>
</evidence>
<feature type="chain" id="PRO_1000084288" description="Methylenetetrahydrofolate--tRNA-(uracil-5-)-methyltransferase TrmFO">
    <location>
        <begin position="1"/>
        <end position="445"/>
    </location>
</feature>
<feature type="binding site" evidence="1">
    <location>
        <begin position="10"/>
        <end position="15"/>
    </location>
    <ligand>
        <name>FAD</name>
        <dbReference type="ChEBI" id="CHEBI:57692"/>
    </ligand>
</feature>
<keyword id="KW-0963">Cytoplasm</keyword>
<keyword id="KW-0274">FAD</keyword>
<keyword id="KW-0285">Flavoprotein</keyword>
<keyword id="KW-0489">Methyltransferase</keyword>
<keyword id="KW-0520">NAD</keyword>
<keyword id="KW-0521">NADP</keyword>
<keyword id="KW-0808">Transferase</keyword>
<keyword id="KW-0819">tRNA processing</keyword>
<protein>
    <recommendedName>
        <fullName evidence="1">Methylenetetrahydrofolate--tRNA-(uracil-5-)-methyltransferase TrmFO</fullName>
        <ecNumber evidence="1">2.1.1.74</ecNumber>
    </recommendedName>
    <alternativeName>
        <fullName evidence="1">Folate-dependent tRNA (uracil-5-)-methyltransferase</fullName>
    </alternativeName>
    <alternativeName>
        <fullName evidence="1">Folate-dependent tRNA(M-5-U54)-methyltransferase</fullName>
    </alternativeName>
</protein>
<comment type="function">
    <text evidence="1">Catalyzes the folate-dependent formation of 5-methyl-uridine at position 54 (M-5-U54) in all tRNAs.</text>
</comment>
<comment type="catalytic activity">
    <reaction evidence="1">
        <text>uridine(54) in tRNA + (6R)-5,10-methylene-5,6,7,8-tetrahydrofolate + NADH + H(+) = 5-methyluridine(54) in tRNA + (6S)-5,6,7,8-tetrahydrofolate + NAD(+)</text>
        <dbReference type="Rhea" id="RHEA:16873"/>
        <dbReference type="Rhea" id="RHEA-COMP:10167"/>
        <dbReference type="Rhea" id="RHEA-COMP:10193"/>
        <dbReference type="ChEBI" id="CHEBI:15378"/>
        <dbReference type="ChEBI" id="CHEBI:15636"/>
        <dbReference type="ChEBI" id="CHEBI:57453"/>
        <dbReference type="ChEBI" id="CHEBI:57540"/>
        <dbReference type="ChEBI" id="CHEBI:57945"/>
        <dbReference type="ChEBI" id="CHEBI:65315"/>
        <dbReference type="ChEBI" id="CHEBI:74447"/>
        <dbReference type="EC" id="2.1.1.74"/>
    </reaction>
</comment>
<comment type="catalytic activity">
    <reaction evidence="1">
        <text>uridine(54) in tRNA + (6R)-5,10-methylene-5,6,7,8-tetrahydrofolate + NADPH + H(+) = 5-methyluridine(54) in tRNA + (6S)-5,6,7,8-tetrahydrofolate + NADP(+)</text>
        <dbReference type="Rhea" id="RHEA:62372"/>
        <dbReference type="Rhea" id="RHEA-COMP:10167"/>
        <dbReference type="Rhea" id="RHEA-COMP:10193"/>
        <dbReference type="ChEBI" id="CHEBI:15378"/>
        <dbReference type="ChEBI" id="CHEBI:15636"/>
        <dbReference type="ChEBI" id="CHEBI:57453"/>
        <dbReference type="ChEBI" id="CHEBI:57783"/>
        <dbReference type="ChEBI" id="CHEBI:58349"/>
        <dbReference type="ChEBI" id="CHEBI:65315"/>
        <dbReference type="ChEBI" id="CHEBI:74447"/>
        <dbReference type="EC" id="2.1.1.74"/>
    </reaction>
</comment>
<comment type="cofactor">
    <cofactor evidence="1">
        <name>FAD</name>
        <dbReference type="ChEBI" id="CHEBI:57692"/>
    </cofactor>
</comment>
<comment type="subcellular location">
    <subcellularLocation>
        <location evidence="1">Cytoplasm</location>
    </subcellularLocation>
</comment>
<comment type="similarity">
    <text evidence="1">Belongs to the MnmG family. TrmFO subfamily.</text>
</comment>
<accession>B0JFX8</accession>
<reference key="1">
    <citation type="journal article" date="2007" name="DNA Res.">
        <title>Complete genomic structure of the bloom-forming toxic cyanobacterium Microcystis aeruginosa NIES-843.</title>
        <authorList>
            <person name="Kaneko T."/>
            <person name="Nakajima N."/>
            <person name="Okamoto S."/>
            <person name="Suzuki I."/>
            <person name="Tanabe Y."/>
            <person name="Tamaoki M."/>
            <person name="Nakamura Y."/>
            <person name="Kasai F."/>
            <person name="Watanabe A."/>
            <person name="Kawashima K."/>
            <person name="Kishida Y."/>
            <person name="Ono A."/>
            <person name="Shimizu Y."/>
            <person name="Takahashi C."/>
            <person name="Minami C."/>
            <person name="Fujishiro T."/>
            <person name="Kohara M."/>
            <person name="Katoh M."/>
            <person name="Nakazaki N."/>
            <person name="Nakayama S."/>
            <person name="Yamada M."/>
            <person name="Tabata S."/>
            <person name="Watanabe M.M."/>
        </authorList>
    </citation>
    <scope>NUCLEOTIDE SEQUENCE [LARGE SCALE GENOMIC DNA]</scope>
    <source>
        <strain>NIES-843 / IAM M-247</strain>
    </source>
</reference>
<dbReference type="EC" id="2.1.1.74" evidence="1"/>
<dbReference type="EMBL" id="AP009552">
    <property type="protein sequence ID" value="BAG01983.1"/>
    <property type="molecule type" value="Genomic_DNA"/>
</dbReference>
<dbReference type="RefSeq" id="WP_012265370.1">
    <property type="nucleotide sequence ID" value="NC_010296.1"/>
</dbReference>
<dbReference type="SMR" id="B0JFX8"/>
<dbReference type="STRING" id="449447.MAE_21610"/>
<dbReference type="PaxDb" id="449447-MAE_21610"/>
<dbReference type="EnsemblBacteria" id="BAG01983">
    <property type="protein sequence ID" value="BAG01983"/>
    <property type="gene ID" value="MAE_21610"/>
</dbReference>
<dbReference type="KEGG" id="mar:MAE_21610"/>
<dbReference type="PATRIC" id="fig|449447.4.peg.1975"/>
<dbReference type="eggNOG" id="COG1206">
    <property type="taxonomic scope" value="Bacteria"/>
</dbReference>
<dbReference type="HOGENOM" id="CLU_033057_1_0_3"/>
<dbReference type="BioCyc" id="MAER449447:MAE_RS09420-MONOMER"/>
<dbReference type="Proteomes" id="UP000001510">
    <property type="component" value="Chromosome"/>
</dbReference>
<dbReference type="GO" id="GO:0005829">
    <property type="term" value="C:cytosol"/>
    <property type="evidence" value="ECO:0007669"/>
    <property type="project" value="TreeGrafter"/>
</dbReference>
<dbReference type="GO" id="GO:0050660">
    <property type="term" value="F:flavin adenine dinucleotide binding"/>
    <property type="evidence" value="ECO:0007669"/>
    <property type="project" value="UniProtKB-UniRule"/>
</dbReference>
<dbReference type="GO" id="GO:0047151">
    <property type="term" value="F:tRNA (uracil(54)-C5)-methyltransferase activity, 5,10-methylenetetrahydrofolate-dependent"/>
    <property type="evidence" value="ECO:0007669"/>
    <property type="project" value="UniProtKB-UniRule"/>
</dbReference>
<dbReference type="GO" id="GO:0030488">
    <property type="term" value="P:tRNA methylation"/>
    <property type="evidence" value="ECO:0007669"/>
    <property type="project" value="TreeGrafter"/>
</dbReference>
<dbReference type="GO" id="GO:0002098">
    <property type="term" value="P:tRNA wobble uridine modification"/>
    <property type="evidence" value="ECO:0007669"/>
    <property type="project" value="TreeGrafter"/>
</dbReference>
<dbReference type="Gene3D" id="3.50.50.60">
    <property type="entry name" value="FAD/NAD(P)-binding domain"/>
    <property type="match status" value="2"/>
</dbReference>
<dbReference type="HAMAP" id="MF_01037">
    <property type="entry name" value="TrmFO"/>
    <property type="match status" value="1"/>
</dbReference>
<dbReference type="InterPro" id="IPR036188">
    <property type="entry name" value="FAD/NAD-bd_sf"/>
</dbReference>
<dbReference type="InterPro" id="IPR002218">
    <property type="entry name" value="MnmG-rel"/>
</dbReference>
<dbReference type="InterPro" id="IPR020595">
    <property type="entry name" value="MnmG-rel_CS"/>
</dbReference>
<dbReference type="InterPro" id="IPR040131">
    <property type="entry name" value="MnmG_N"/>
</dbReference>
<dbReference type="InterPro" id="IPR004417">
    <property type="entry name" value="TrmFO"/>
</dbReference>
<dbReference type="NCBIfam" id="TIGR00137">
    <property type="entry name" value="gid_trmFO"/>
    <property type="match status" value="1"/>
</dbReference>
<dbReference type="NCBIfam" id="NF003739">
    <property type="entry name" value="PRK05335.1"/>
    <property type="match status" value="1"/>
</dbReference>
<dbReference type="PANTHER" id="PTHR11806">
    <property type="entry name" value="GLUCOSE INHIBITED DIVISION PROTEIN A"/>
    <property type="match status" value="1"/>
</dbReference>
<dbReference type="PANTHER" id="PTHR11806:SF2">
    <property type="entry name" value="METHYLENETETRAHYDROFOLATE--TRNA-(URACIL-5-)-METHYLTRANSFERASE TRMFO"/>
    <property type="match status" value="1"/>
</dbReference>
<dbReference type="Pfam" id="PF01134">
    <property type="entry name" value="GIDA"/>
    <property type="match status" value="1"/>
</dbReference>
<dbReference type="SUPFAM" id="SSF51905">
    <property type="entry name" value="FAD/NAD(P)-binding domain"/>
    <property type="match status" value="1"/>
</dbReference>
<dbReference type="PROSITE" id="PS01281">
    <property type="entry name" value="GIDA_2"/>
    <property type="match status" value="1"/>
</dbReference>
<proteinExistence type="inferred from homology"/>
<name>TRMFO_MICAN</name>
<gene>
    <name evidence="1" type="primary">trmFO</name>
    <name type="synonym">gid</name>
    <name type="ordered locus">MAE_21610</name>
</gene>